<gene>
    <name evidence="1" type="primary">ureA</name>
    <name type="ordered locus">Mflv_3354</name>
</gene>
<evidence type="ECO:0000255" key="1">
    <source>
        <dbReference type="HAMAP-Rule" id="MF_00739"/>
    </source>
</evidence>
<feature type="chain" id="PRO_1000083425" description="Urease subunit gamma">
    <location>
        <begin position="1"/>
        <end position="100"/>
    </location>
</feature>
<comment type="catalytic activity">
    <reaction evidence="1">
        <text>urea + 2 H2O + H(+) = hydrogencarbonate + 2 NH4(+)</text>
        <dbReference type="Rhea" id="RHEA:20557"/>
        <dbReference type="ChEBI" id="CHEBI:15377"/>
        <dbReference type="ChEBI" id="CHEBI:15378"/>
        <dbReference type="ChEBI" id="CHEBI:16199"/>
        <dbReference type="ChEBI" id="CHEBI:17544"/>
        <dbReference type="ChEBI" id="CHEBI:28938"/>
        <dbReference type="EC" id="3.5.1.5"/>
    </reaction>
</comment>
<comment type="pathway">
    <text evidence="1">Nitrogen metabolism; urea degradation; CO(2) and NH(3) from urea (urease route): step 1/1.</text>
</comment>
<comment type="subunit">
    <text evidence="1">Heterotrimer of UreA (gamma), UreB (beta) and UreC (alpha) subunits. Three heterotrimers associate to form the active enzyme.</text>
</comment>
<comment type="subcellular location">
    <subcellularLocation>
        <location evidence="1">Cytoplasm</location>
    </subcellularLocation>
</comment>
<comment type="similarity">
    <text evidence="1">Belongs to the urease gamma subunit family.</text>
</comment>
<reference key="1">
    <citation type="submission" date="2007-04" db="EMBL/GenBank/DDBJ databases">
        <title>Complete sequence of chromosome of Mycobacterium gilvum PYR-GCK.</title>
        <authorList>
            <consortium name="US DOE Joint Genome Institute"/>
            <person name="Copeland A."/>
            <person name="Lucas S."/>
            <person name="Lapidus A."/>
            <person name="Barry K."/>
            <person name="Detter J.C."/>
            <person name="Glavina del Rio T."/>
            <person name="Hammon N."/>
            <person name="Israni S."/>
            <person name="Dalin E."/>
            <person name="Tice H."/>
            <person name="Pitluck S."/>
            <person name="Chain P."/>
            <person name="Malfatti S."/>
            <person name="Shin M."/>
            <person name="Vergez L."/>
            <person name="Schmutz J."/>
            <person name="Larimer F."/>
            <person name="Land M."/>
            <person name="Hauser L."/>
            <person name="Kyrpides N."/>
            <person name="Mikhailova N."/>
            <person name="Miller C."/>
            <person name="Richardson P."/>
        </authorList>
    </citation>
    <scope>NUCLEOTIDE SEQUENCE [LARGE SCALE GENOMIC DNA]</scope>
    <source>
        <strain>PYR-GCK</strain>
    </source>
</reference>
<name>URE3_MYCGI</name>
<accession>A4TAD3</accession>
<organism>
    <name type="scientific">Mycolicibacterium gilvum (strain PYR-GCK)</name>
    <name type="common">Mycobacterium gilvum (strain PYR-GCK)</name>
    <dbReference type="NCBI Taxonomy" id="350054"/>
    <lineage>
        <taxon>Bacteria</taxon>
        <taxon>Bacillati</taxon>
        <taxon>Actinomycetota</taxon>
        <taxon>Actinomycetes</taxon>
        <taxon>Mycobacteriales</taxon>
        <taxon>Mycobacteriaceae</taxon>
        <taxon>Mycolicibacterium</taxon>
    </lineage>
</organism>
<proteinExistence type="inferred from homology"/>
<dbReference type="EC" id="3.5.1.5" evidence="1"/>
<dbReference type="EMBL" id="CP000656">
    <property type="protein sequence ID" value="ABP45830.1"/>
    <property type="molecule type" value="Genomic_DNA"/>
</dbReference>
<dbReference type="SMR" id="A4TAD3"/>
<dbReference type="STRING" id="350054.Mflv_3354"/>
<dbReference type="KEGG" id="mgi:Mflv_3354"/>
<dbReference type="eggNOG" id="COG0831">
    <property type="taxonomic scope" value="Bacteria"/>
</dbReference>
<dbReference type="HOGENOM" id="CLU_145825_1_0_11"/>
<dbReference type="OrthoDB" id="9797217at2"/>
<dbReference type="UniPathway" id="UPA00258">
    <property type="reaction ID" value="UER00370"/>
</dbReference>
<dbReference type="GO" id="GO:0005737">
    <property type="term" value="C:cytoplasm"/>
    <property type="evidence" value="ECO:0007669"/>
    <property type="project" value="UniProtKB-SubCell"/>
</dbReference>
<dbReference type="GO" id="GO:0016151">
    <property type="term" value="F:nickel cation binding"/>
    <property type="evidence" value="ECO:0007669"/>
    <property type="project" value="InterPro"/>
</dbReference>
<dbReference type="GO" id="GO:0009039">
    <property type="term" value="F:urease activity"/>
    <property type="evidence" value="ECO:0007669"/>
    <property type="project" value="UniProtKB-UniRule"/>
</dbReference>
<dbReference type="GO" id="GO:0043419">
    <property type="term" value="P:urea catabolic process"/>
    <property type="evidence" value="ECO:0007669"/>
    <property type="project" value="UniProtKB-UniRule"/>
</dbReference>
<dbReference type="CDD" id="cd00390">
    <property type="entry name" value="Urease_gamma"/>
    <property type="match status" value="1"/>
</dbReference>
<dbReference type="Gene3D" id="3.30.280.10">
    <property type="entry name" value="Urease, gamma-like subunit"/>
    <property type="match status" value="1"/>
</dbReference>
<dbReference type="HAMAP" id="MF_00739">
    <property type="entry name" value="Urease_gamma"/>
    <property type="match status" value="1"/>
</dbReference>
<dbReference type="InterPro" id="IPR012010">
    <property type="entry name" value="Urease_gamma"/>
</dbReference>
<dbReference type="InterPro" id="IPR002026">
    <property type="entry name" value="Urease_gamma/gamma-beta_su"/>
</dbReference>
<dbReference type="InterPro" id="IPR036463">
    <property type="entry name" value="Urease_gamma_sf"/>
</dbReference>
<dbReference type="InterPro" id="IPR050069">
    <property type="entry name" value="Urease_subunit"/>
</dbReference>
<dbReference type="NCBIfam" id="NF009712">
    <property type="entry name" value="PRK13241.1"/>
    <property type="match status" value="1"/>
</dbReference>
<dbReference type="NCBIfam" id="TIGR00193">
    <property type="entry name" value="urease_gam"/>
    <property type="match status" value="1"/>
</dbReference>
<dbReference type="PANTHER" id="PTHR33569">
    <property type="entry name" value="UREASE"/>
    <property type="match status" value="1"/>
</dbReference>
<dbReference type="PANTHER" id="PTHR33569:SF1">
    <property type="entry name" value="UREASE"/>
    <property type="match status" value="1"/>
</dbReference>
<dbReference type="Pfam" id="PF00547">
    <property type="entry name" value="Urease_gamma"/>
    <property type="match status" value="1"/>
</dbReference>
<dbReference type="PIRSF" id="PIRSF001223">
    <property type="entry name" value="Urease_gamma"/>
    <property type="match status" value="1"/>
</dbReference>
<dbReference type="SUPFAM" id="SSF54111">
    <property type="entry name" value="Urease, gamma-subunit"/>
    <property type="match status" value="1"/>
</dbReference>
<protein>
    <recommendedName>
        <fullName evidence="1">Urease subunit gamma</fullName>
        <ecNumber evidence="1">3.5.1.5</ecNumber>
    </recommendedName>
    <alternativeName>
        <fullName evidence="1">Urea amidohydrolase subunit gamma</fullName>
    </alternativeName>
</protein>
<keyword id="KW-0963">Cytoplasm</keyword>
<keyword id="KW-0378">Hydrolase</keyword>
<sequence length="100" mass="11109">MRLTPHEQERLLLSYAAELARRRQARGLKLNHPEAVAIITDHILEGARDGRTVAELMISGRDVLGRDDVLVGVPEMLDDVQVEATFPDGTKLVTVHHPIP</sequence>